<gene>
    <name evidence="1" type="primary">rpsI</name>
    <name evidence="1" type="synonym">rps9</name>
    <name type="ordered locus">all4187</name>
</gene>
<accession>Q8YPK7</accession>
<protein>
    <recommendedName>
        <fullName evidence="1">Small ribosomal subunit protein uS9</fullName>
    </recommendedName>
    <alternativeName>
        <fullName evidence="3">30S ribosomal protein S9</fullName>
    </alternativeName>
</protein>
<dbReference type="EMBL" id="BA000019">
    <property type="protein sequence ID" value="BAB75886.1"/>
    <property type="molecule type" value="Genomic_DNA"/>
</dbReference>
<dbReference type="PIR" id="AD2329">
    <property type="entry name" value="AD2329"/>
</dbReference>
<dbReference type="RefSeq" id="WP_010998326.1">
    <property type="nucleotide sequence ID" value="NZ_RSCN01000010.1"/>
</dbReference>
<dbReference type="SMR" id="Q8YPK7"/>
<dbReference type="STRING" id="103690.gene:10496236"/>
<dbReference type="GeneID" id="58723377"/>
<dbReference type="KEGG" id="ana:all4187"/>
<dbReference type="eggNOG" id="COG0103">
    <property type="taxonomic scope" value="Bacteria"/>
</dbReference>
<dbReference type="OrthoDB" id="9803965at2"/>
<dbReference type="Proteomes" id="UP000002483">
    <property type="component" value="Chromosome"/>
</dbReference>
<dbReference type="GO" id="GO:0022627">
    <property type="term" value="C:cytosolic small ribosomal subunit"/>
    <property type="evidence" value="ECO:0007669"/>
    <property type="project" value="TreeGrafter"/>
</dbReference>
<dbReference type="GO" id="GO:0003723">
    <property type="term" value="F:RNA binding"/>
    <property type="evidence" value="ECO:0007669"/>
    <property type="project" value="TreeGrafter"/>
</dbReference>
<dbReference type="GO" id="GO:0003735">
    <property type="term" value="F:structural constituent of ribosome"/>
    <property type="evidence" value="ECO:0007669"/>
    <property type="project" value="InterPro"/>
</dbReference>
<dbReference type="GO" id="GO:0006412">
    <property type="term" value="P:translation"/>
    <property type="evidence" value="ECO:0007669"/>
    <property type="project" value="UniProtKB-UniRule"/>
</dbReference>
<dbReference type="FunFam" id="3.30.230.10:FF:000001">
    <property type="entry name" value="30S ribosomal protein S9"/>
    <property type="match status" value="1"/>
</dbReference>
<dbReference type="Gene3D" id="3.30.230.10">
    <property type="match status" value="1"/>
</dbReference>
<dbReference type="HAMAP" id="MF_00532_B">
    <property type="entry name" value="Ribosomal_uS9_B"/>
    <property type="match status" value="1"/>
</dbReference>
<dbReference type="InterPro" id="IPR020568">
    <property type="entry name" value="Ribosomal_Su5_D2-typ_SF"/>
</dbReference>
<dbReference type="InterPro" id="IPR000754">
    <property type="entry name" value="Ribosomal_uS9"/>
</dbReference>
<dbReference type="InterPro" id="IPR023035">
    <property type="entry name" value="Ribosomal_uS9_bac/plastid"/>
</dbReference>
<dbReference type="InterPro" id="IPR020574">
    <property type="entry name" value="Ribosomal_uS9_CS"/>
</dbReference>
<dbReference type="InterPro" id="IPR014721">
    <property type="entry name" value="Ribsml_uS5_D2-typ_fold_subgr"/>
</dbReference>
<dbReference type="NCBIfam" id="NF001099">
    <property type="entry name" value="PRK00132.1"/>
    <property type="match status" value="1"/>
</dbReference>
<dbReference type="PANTHER" id="PTHR21569">
    <property type="entry name" value="RIBOSOMAL PROTEIN S9"/>
    <property type="match status" value="1"/>
</dbReference>
<dbReference type="PANTHER" id="PTHR21569:SF1">
    <property type="entry name" value="SMALL RIBOSOMAL SUBUNIT PROTEIN US9M"/>
    <property type="match status" value="1"/>
</dbReference>
<dbReference type="Pfam" id="PF00380">
    <property type="entry name" value="Ribosomal_S9"/>
    <property type="match status" value="1"/>
</dbReference>
<dbReference type="SUPFAM" id="SSF54211">
    <property type="entry name" value="Ribosomal protein S5 domain 2-like"/>
    <property type="match status" value="1"/>
</dbReference>
<dbReference type="PROSITE" id="PS00360">
    <property type="entry name" value="RIBOSOMAL_S9"/>
    <property type="match status" value="1"/>
</dbReference>
<proteinExistence type="inferred from homology"/>
<organism>
    <name type="scientific">Nostoc sp. (strain PCC 7120 / SAG 25.82 / UTEX 2576)</name>
    <dbReference type="NCBI Taxonomy" id="103690"/>
    <lineage>
        <taxon>Bacteria</taxon>
        <taxon>Bacillati</taxon>
        <taxon>Cyanobacteriota</taxon>
        <taxon>Cyanophyceae</taxon>
        <taxon>Nostocales</taxon>
        <taxon>Nostocaceae</taxon>
        <taxon>Nostoc</taxon>
    </lineage>
</organism>
<sequence length="138" mass="15153">MVVAEANSGRAVYWGTGRRKSAVARVRLVPGTGQLIVNGKPGDLYFQFNANYLGVIKAPLETLGLENEYDILVKAEGGGLTGQADSVRLGVARALCQLDPENRPPLKTEGYLTRDPRAKERKKYGLHKARKAPQYSKR</sequence>
<name>RS9_NOSS1</name>
<keyword id="KW-1185">Reference proteome</keyword>
<keyword id="KW-0687">Ribonucleoprotein</keyword>
<keyword id="KW-0689">Ribosomal protein</keyword>
<comment type="similarity">
    <text evidence="1">Belongs to the universal ribosomal protein uS9 family.</text>
</comment>
<feature type="chain" id="PRO_0000111320" description="Small ribosomal subunit protein uS9">
    <location>
        <begin position="1"/>
        <end position="138"/>
    </location>
</feature>
<feature type="region of interest" description="Disordered" evidence="2">
    <location>
        <begin position="100"/>
        <end position="138"/>
    </location>
</feature>
<feature type="compositionally biased region" description="Basic and acidic residues" evidence="2">
    <location>
        <begin position="100"/>
        <end position="118"/>
    </location>
</feature>
<feature type="compositionally biased region" description="Basic residues" evidence="2">
    <location>
        <begin position="119"/>
        <end position="138"/>
    </location>
</feature>
<reference key="1">
    <citation type="journal article" date="2001" name="DNA Res.">
        <title>Complete genomic sequence of the filamentous nitrogen-fixing cyanobacterium Anabaena sp. strain PCC 7120.</title>
        <authorList>
            <person name="Kaneko T."/>
            <person name="Nakamura Y."/>
            <person name="Wolk C.P."/>
            <person name="Kuritz T."/>
            <person name="Sasamoto S."/>
            <person name="Watanabe A."/>
            <person name="Iriguchi M."/>
            <person name="Ishikawa A."/>
            <person name="Kawashima K."/>
            <person name="Kimura T."/>
            <person name="Kishida Y."/>
            <person name="Kohara M."/>
            <person name="Matsumoto M."/>
            <person name="Matsuno A."/>
            <person name="Muraki A."/>
            <person name="Nakazaki N."/>
            <person name="Shimpo S."/>
            <person name="Sugimoto M."/>
            <person name="Takazawa M."/>
            <person name="Yamada M."/>
            <person name="Yasuda M."/>
            <person name="Tabata S."/>
        </authorList>
    </citation>
    <scope>NUCLEOTIDE SEQUENCE [LARGE SCALE GENOMIC DNA]</scope>
    <source>
        <strain>PCC 7120 / SAG 25.82 / UTEX 2576</strain>
    </source>
</reference>
<evidence type="ECO:0000255" key="1">
    <source>
        <dbReference type="HAMAP-Rule" id="MF_00532"/>
    </source>
</evidence>
<evidence type="ECO:0000256" key="2">
    <source>
        <dbReference type="SAM" id="MobiDB-lite"/>
    </source>
</evidence>
<evidence type="ECO:0000305" key="3"/>